<comment type="function">
    <text evidence="1">Functions in the N-end rule pathway of protein degradation where it conjugates Leu, Phe and, less efficiently, Met from aminoacyl-tRNAs to the N-termini of proteins containing an N-terminal arginine or lysine.</text>
</comment>
<comment type="catalytic activity">
    <reaction evidence="1">
        <text>N-terminal L-lysyl-[protein] + L-leucyl-tRNA(Leu) = N-terminal L-leucyl-L-lysyl-[protein] + tRNA(Leu) + H(+)</text>
        <dbReference type="Rhea" id="RHEA:12340"/>
        <dbReference type="Rhea" id="RHEA-COMP:9613"/>
        <dbReference type="Rhea" id="RHEA-COMP:9622"/>
        <dbReference type="Rhea" id="RHEA-COMP:12670"/>
        <dbReference type="Rhea" id="RHEA-COMP:12671"/>
        <dbReference type="ChEBI" id="CHEBI:15378"/>
        <dbReference type="ChEBI" id="CHEBI:65249"/>
        <dbReference type="ChEBI" id="CHEBI:78442"/>
        <dbReference type="ChEBI" id="CHEBI:78494"/>
        <dbReference type="ChEBI" id="CHEBI:133043"/>
        <dbReference type="EC" id="2.3.2.6"/>
    </reaction>
</comment>
<comment type="catalytic activity">
    <reaction evidence="1">
        <text>N-terminal L-arginyl-[protein] + L-leucyl-tRNA(Leu) = N-terminal L-leucyl-L-arginyl-[protein] + tRNA(Leu) + H(+)</text>
        <dbReference type="Rhea" id="RHEA:50416"/>
        <dbReference type="Rhea" id="RHEA-COMP:9613"/>
        <dbReference type="Rhea" id="RHEA-COMP:9622"/>
        <dbReference type="Rhea" id="RHEA-COMP:12672"/>
        <dbReference type="Rhea" id="RHEA-COMP:12673"/>
        <dbReference type="ChEBI" id="CHEBI:15378"/>
        <dbReference type="ChEBI" id="CHEBI:64719"/>
        <dbReference type="ChEBI" id="CHEBI:78442"/>
        <dbReference type="ChEBI" id="CHEBI:78494"/>
        <dbReference type="ChEBI" id="CHEBI:133044"/>
        <dbReference type="EC" id="2.3.2.6"/>
    </reaction>
</comment>
<comment type="catalytic activity">
    <reaction evidence="1">
        <text>L-phenylalanyl-tRNA(Phe) + an N-terminal L-alpha-aminoacyl-[protein] = an N-terminal L-phenylalanyl-L-alpha-aminoacyl-[protein] + tRNA(Phe)</text>
        <dbReference type="Rhea" id="RHEA:43632"/>
        <dbReference type="Rhea" id="RHEA-COMP:9668"/>
        <dbReference type="Rhea" id="RHEA-COMP:9699"/>
        <dbReference type="Rhea" id="RHEA-COMP:10636"/>
        <dbReference type="Rhea" id="RHEA-COMP:10637"/>
        <dbReference type="ChEBI" id="CHEBI:78442"/>
        <dbReference type="ChEBI" id="CHEBI:78531"/>
        <dbReference type="ChEBI" id="CHEBI:78597"/>
        <dbReference type="ChEBI" id="CHEBI:83561"/>
        <dbReference type="EC" id="2.3.2.6"/>
    </reaction>
</comment>
<comment type="subcellular location">
    <subcellularLocation>
        <location evidence="1">Cytoplasm</location>
    </subcellularLocation>
</comment>
<comment type="similarity">
    <text evidence="1">Belongs to the L/F-transferase family.</text>
</comment>
<dbReference type="EC" id="2.3.2.6" evidence="1"/>
<dbReference type="EMBL" id="AM180252">
    <property type="protein sequence ID" value="CAJ54673.1"/>
    <property type="molecule type" value="Genomic_DNA"/>
</dbReference>
<dbReference type="RefSeq" id="WP_011526702.1">
    <property type="nucleotide sequence ID" value="NC_008011.1"/>
</dbReference>
<dbReference type="SMR" id="Q1MQQ4"/>
<dbReference type="STRING" id="363253.LI0619"/>
<dbReference type="KEGG" id="lip:LI0619"/>
<dbReference type="eggNOG" id="COG2360">
    <property type="taxonomic scope" value="Bacteria"/>
</dbReference>
<dbReference type="HOGENOM" id="CLU_075045_0_0_7"/>
<dbReference type="OrthoDB" id="9790282at2"/>
<dbReference type="Proteomes" id="UP000002430">
    <property type="component" value="Chromosome"/>
</dbReference>
<dbReference type="GO" id="GO:0005737">
    <property type="term" value="C:cytoplasm"/>
    <property type="evidence" value="ECO:0007669"/>
    <property type="project" value="UniProtKB-SubCell"/>
</dbReference>
<dbReference type="GO" id="GO:0008914">
    <property type="term" value="F:leucyl-tRNA--protein transferase activity"/>
    <property type="evidence" value="ECO:0007669"/>
    <property type="project" value="UniProtKB-UniRule"/>
</dbReference>
<dbReference type="GO" id="GO:0030163">
    <property type="term" value="P:protein catabolic process"/>
    <property type="evidence" value="ECO:0007669"/>
    <property type="project" value="UniProtKB-UniRule"/>
</dbReference>
<dbReference type="FunFam" id="3.30.70.3550:FF:000001">
    <property type="entry name" value="Leucyl/phenylalanyl-tRNA--protein transferase"/>
    <property type="match status" value="1"/>
</dbReference>
<dbReference type="Gene3D" id="3.40.630.70">
    <property type="entry name" value="Leucyl/phenylalanyl-tRNA-protein transferase, C-terminal domain"/>
    <property type="match status" value="1"/>
</dbReference>
<dbReference type="Gene3D" id="3.30.70.3550">
    <property type="entry name" value="Leucyl/phenylalanyl-tRNA-protein transferase, N-terminal domain"/>
    <property type="match status" value="1"/>
</dbReference>
<dbReference type="HAMAP" id="MF_00688">
    <property type="entry name" value="Leu_Phe_trans"/>
    <property type="match status" value="1"/>
</dbReference>
<dbReference type="InterPro" id="IPR016181">
    <property type="entry name" value="Acyl_CoA_acyltransferase"/>
</dbReference>
<dbReference type="InterPro" id="IPR004616">
    <property type="entry name" value="Leu/Phe-tRNA_Trfase"/>
</dbReference>
<dbReference type="InterPro" id="IPR042203">
    <property type="entry name" value="Leu/Phe-tRNA_Trfase_C"/>
</dbReference>
<dbReference type="InterPro" id="IPR042221">
    <property type="entry name" value="Leu/Phe-tRNA_Trfase_N"/>
</dbReference>
<dbReference type="NCBIfam" id="TIGR00667">
    <property type="entry name" value="aat"/>
    <property type="match status" value="1"/>
</dbReference>
<dbReference type="PANTHER" id="PTHR30098">
    <property type="entry name" value="LEUCYL/PHENYLALANYL-TRNA--PROTEIN TRANSFERASE"/>
    <property type="match status" value="1"/>
</dbReference>
<dbReference type="PANTHER" id="PTHR30098:SF2">
    <property type="entry name" value="LEUCYL_PHENYLALANYL-TRNA--PROTEIN TRANSFERASE"/>
    <property type="match status" value="1"/>
</dbReference>
<dbReference type="Pfam" id="PF03588">
    <property type="entry name" value="Leu_Phe_trans"/>
    <property type="match status" value="1"/>
</dbReference>
<dbReference type="SUPFAM" id="SSF55729">
    <property type="entry name" value="Acyl-CoA N-acyltransferases (Nat)"/>
    <property type="match status" value="1"/>
</dbReference>
<organism>
    <name type="scientific">Lawsonia intracellularis (strain PHE/MN1-00)</name>
    <dbReference type="NCBI Taxonomy" id="363253"/>
    <lineage>
        <taxon>Bacteria</taxon>
        <taxon>Pseudomonadati</taxon>
        <taxon>Thermodesulfobacteriota</taxon>
        <taxon>Desulfovibrionia</taxon>
        <taxon>Desulfovibrionales</taxon>
        <taxon>Desulfovibrionaceae</taxon>
        <taxon>Lawsonia</taxon>
    </lineage>
</organism>
<gene>
    <name evidence="1" type="primary">aat</name>
    <name type="ordered locus">LI0619</name>
</gene>
<protein>
    <recommendedName>
        <fullName evidence="1">Leucyl/phenylalanyl-tRNA--protein transferase</fullName>
        <ecNumber evidence="1">2.3.2.6</ecNumber>
    </recommendedName>
    <alternativeName>
        <fullName evidence="1">L/F-transferase</fullName>
    </alternativeName>
    <alternativeName>
        <fullName evidence="1">Leucyltransferase</fullName>
    </alternativeName>
    <alternativeName>
        <fullName evidence="1">Phenyalanyltransferase</fullName>
    </alternativeName>
</protein>
<proteinExistence type="inferred from homology"/>
<keyword id="KW-0012">Acyltransferase</keyword>
<keyword id="KW-0963">Cytoplasm</keyword>
<keyword id="KW-1185">Reference proteome</keyword>
<keyword id="KW-0808">Transferase</keyword>
<reference key="1">
    <citation type="submission" date="2005-11" db="EMBL/GenBank/DDBJ databases">
        <title>The complete genome sequence of Lawsonia intracellularis: the causative agent of proliferative enteropathy.</title>
        <authorList>
            <person name="Kaur K."/>
            <person name="Zhang Q."/>
            <person name="Beckler D."/>
            <person name="Munir S."/>
            <person name="Li L."/>
            <person name="Kinsley K."/>
            <person name="Herron L."/>
            <person name="Peterson A."/>
            <person name="May B."/>
            <person name="Singh S."/>
            <person name="Gebhart C."/>
            <person name="Kapur V."/>
        </authorList>
    </citation>
    <scope>NUCLEOTIDE SEQUENCE [LARGE SCALE GENOMIC DNA]</scope>
    <source>
        <strain>PHE/MN1-00</strain>
    </source>
</reference>
<name>LFTR_LAWIP</name>
<feature type="chain" id="PRO_0000258063" description="Leucyl/phenylalanyl-tRNA--protein transferase">
    <location>
        <begin position="1"/>
        <end position="228"/>
    </location>
</feature>
<sequence>MLSALSNDPMYFPPLETAFDNGLLAYGGDLSPQRLLSAYTKGIFPWYDNNSPILWWSPDPRCILLPENFRIPKTIQRELKKCTFSVTINNAFTEVITACATLPRTKQKGTWITQDMKMAYIQLHKLGFSHSIEVWDNSTLVGGLYGVALGKAFFGESMFHIAPHASKLALVWLAQYLWSYNFDFIDCQMPTTHIMRYGATLISRNEFLTRLTIAVTTGTSQASTKEAL</sequence>
<accession>Q1MQQ4</accession>
<evidence type="ECO:0000255" key="1">
    <source>
        <dbReference type="HAMAP-Rule" id="MF_00688"/>
    </source>
</evidence>